<keyword id="KW-0002">3D-structure</keyword>
<keyword id="KW-0010">Activator</keyword>
<keyword id="KW-0963">Cytoplasm</keyword>
<keyword id="KW-0539">Nucleus</keyword>
<keyword id="KW-1185">Reference proteome</keyword>
<keyword id="KW-0678">Repressor</keyword>
<keyword id="KW-0804">Transcription</keyword>
<keyword id="KW-0805">Transcription regulation</keyword>
<comment type="function">
    <text evidence="6">Acts as a component of the CCR4-NOT core complex, which in the nucleus seems to be a general transcription factor, and in the cytoplasm the major mRNA deadenylase involved in mRNA turnover. NOT2 is required for the integrity of the complex. The NOT protein subcomplex negatively regulates the basal and activated transcription of many genes. Preferentially affects TC-type TATA element-dependent transcription. Could directly or indirectly inhibit component(s) of the general transcription machinery.</text>
</comment>
<comment type="subunit">
    <text evidence="1 2 4 6">Forms a NOT protein complex that comprises NOT1, NOT2, NOT3, NOT4 and NOT5. Subunit of the 1.0 MDa CCR4-NOT core complex that contains CCR4, CAF1, NOT1, NOT2, NOT3, NOT4, NOT5, CAF40 and CAF130. In the complex interacts with NOT1 and NOT5. The core complex probably is part of a less characterized 1.9 MDa CCR4-NOT complex.</text>
</comment>
<comment type="interaction">
    <interactant intactId="EBI-12153">
        <id>P06100</id>
    </interactant>
    <interactant intactId="EBI-28306">
        <id>P53829</id>
        <label>CAF40</label>
    </interactant>
    <organismsDiffer>false</organismsDiffer>
    <experiments>3</experiments>
</comment>
<comment type="interaction">
    <interactant intactId="EBI-12153">
        <id>P06100</id>
    </interactant>
    <interactant intactId="EBI-12139">
        <id>P25655</id>
        <label>CDC39</label>
    </interactant>
    <organismsDiffer>false</organismsDiffer>
    <experiments>8</experiments>
</comment>
<comment type="interaction">
    <interactant intactId="EBI-12153">
        <id>P06100</id>
    </interactant>
    <interactant intactId="EBI-12174">
        <id>P34909</id>
        <label>MOT2</label>
    </interactant>
    <organismsDiffer>false</organismsDiffer>
    <experiments>4</experiments>
</comment>
<comment type="interaction">
    <interactant intactId="EBI-12153">
        <id>P06100</id>
    </interactant>
    <interactant intactId="EBI-12165">
        <id>P06102</id>
        <label>NOT3</label>
    </interactant>
    <organismsDiffer>false</organismsDiffer>
    <experiments>3</experiments>
</comment>
<comment type="interaction">
    <interactant intactId="EBI-12153">
        <id>P06100</id>
    </interactant>
    <interactant intactId="EBI-12184">
        <id>Q12514</id>
        <label>NOT5</label>
    </interactant>
    <organismsDiffer>false</organismsDiffer>
    <experiments>7</experiments>
</comment>
<comment type="subcellular location">
    <subcellularLocation>
        <location evidence="3">Cytoplasm</location>
    </subcellularLocation>
    <subcellularLocation>
        <location evidence="3">Nucleus</location>
    </subcellularLocation>
</comment>
<comment type="miscellaneous">
    <text evidence="5">Present with 2120 molecules/cell in log phase SD medium.</text>
</comment>
<comment type="similarity">
    <text evidence="7">Belongs to the CNOT2/3/5 family.</text>
</comment>
<feature type="chain" id="PRO_0000198336" description="General negative regulator of transcription subunit 2">
    <location>
        <begin position="1"/>
        <end position="191"/>
    </location>
</feature>
<feature type="strand" evidence="8">
    <location>
        <begin position="7"/>
        <end position="9"/>
    </location>
</feature>
<feature type="helix" evidence="8">
    <location>
        <begin position="35"/>
        <end position="40"/>
    </location>
</feature>
<feature type="helix" evidence="8">
    <location>
        <begin position="53"/>
        <end position="55"/>
    </location>
</feature>
<feature type="strand" evidence="8">
    <location>
        <begin position="59"/>
        <end position="61"/>
    </location>
</feature>
<feature type="helix" evidence="8">
    <location>
        <begin position="76"/>
        <end position="78"/>
    </location>
</feature>
<feature type="helix" evidence="8">
    <location>
        <begin position="84"/>
        <end position="86"/>
    </location>
</feature>
<feature type="strand" evidence="8">
    <location>
        <begin position="88"/>
        <end position="91"/>
    </location>
</feature>
<feature type="turn" evidence="8">
    <location>
        <begin position="97"/>
        <end position="99"/>
    </location>
</feature>
<feature type="helix" evidence="8">
    <location>
        <begin position="101"/>
        <end position="104"/>
    </location>
</feature>
<feature type="helix" evidence="8">
    <location>
        <begin position="109"/>
        <end position="118"/>
    </location>
</feature>
<feature type="helix" evidence="8">
    <location>
        <begin position="123"/>
        <end position="134"/>
    </location>
</feature>
<feature type="strand" evidence="8">
    <location>
        <begin position="138"/>
        <end position="140"/>
    </location>
</feature>
<feature type="turn" evidence="8">
    <location>
        <begin position="141"/>
        <end position="144"/>
    </location>
</feature>
<feature type="strand" evidence="8">
    <location>
        <begin position="145"/>
        <end position="149"/>
    </location>
</feature>
<feature type="strand" evidence="8">
    <location>
        <begin position="161"/>
        <end position="172"/>
    </location>
</feature>
<feature type="turn" evidence="8">
    <location>
        <begin position="173"/>
        <end position="176"/>
    </location>
</feature>
<feature type="strand" evidence="8">
    <location>
        <begin position="177"/>
        <end position="186"/>
    </location>
</feature>
<feature type="helix" evidence="8">
    <location>
        <begin position="187"/>
        <end position="189"/>
    </location>
</feature>
<reference key="1">
    <citation type="journal article" date="1986" name="Nucleic Acids Res.">
        <title>Nucleotide sequence of the yeast cell division cycle start genes CDC28, CDC36, CDC37, and CDC39, and a structural analysis of the predicted products.</title>
        <authorList>
            <person name="Ferguson J."/>
            <person name="Ho J.-Y."/>
            <person name="Peterson T.A."/>
            <person name="Reed S.I."/>
        </authorList>
    </citation>
    <scope>NUCLEOTIDE SEQUENCE [GENOMIC DNA]</scope>
</reference>
<reference key="2">
    <citation type="journal article" date="1985" name="Nucleic Acids Res.">
        <title>The nucleotide sequence of the DNA ligase gene (CDC9) from Saccharomyces cerevisiae: a gene which is cell-cycle regulated and induced in response to DNA damage.</title>
        <authorList>
            <person name="Barker D.G."/>
            <person name="White J.H.M."/>
            <person name="Johnston L.H."/>
        </authorList>
    </citation>
    <scope>NUCLEOTIDE SEQUENCE [GENOMIC DNA]</scope>
</reference>
<reference key="3">
    <citation type="journal article" date="1997" name="Nature">
        <title>The nucleotide sequence of Saccharomyces cerevisiae chromosome IV.</title>
        <authorList>
            <person name="Jacq C."/>
            <person name="Alt-Moerbe J."/>
            <person name="Andre B."/>
            <person name="Arnold W."/>
            <person name="Bahr A."/>
            <person name="Ballesta J.P.G."/>
            <person name="Bargues M."/>
            <person name="Baron L."/>
            <person name="Becker A."/>
            <person name="Biteau N."/>
            <person name="Bloecker H."/>
            <person name="Blugeon C."/>
            <person name="Boskovic J."/>
            <person name="Brandt P."/>
            <person name="Brueckner M."/>
            <person name="Buitrago M.J."/>
            <person name="Coster F."/>
            <person name="Delaveau T."/>
            <person name="del Rey F."/>
            <person name="Dujon B."/>
            <person name="Eide L.G."/>
            <person name="Garcia-Cantalejo J.M."/>
            <person name="Goffeau A."/>
            <person name="Gomez-Peris A."/>
            <person name="Granotier C."/>
            <person name="Hanemann V."/>
            <person name="Hankeln T."/>
            <person name="Hoheisel J.D."/>
            <person name="Jaeger W."/>
            <person name="Jimenez A."/>
            <person name="Jonniaux J.-L."/>
            <person name="Kraemer C."/>
            <person name="Kuester H."/>
            <person name="Laamanen P."/>
            <person name="Legros Y."/>
            <person name="Louis E.J."/>
            <person name="Moeller-Rieker S."/>
            <person name="Monnet A."/>
            <person name="Moro M."/>
            <person name="Mueller-Auer S."/>
            <person name="Nussbaumer B."/>
            <person name="Paricio N."/>
            <person name="Paulin L."/>
            <person name="Perea J."/>
            <person name="Perez-Alonso M."/>
            <person name="Perez-Ortin J.E."/>
            <person name="Pohl T.M."/>
            <person name="Prydz H."/>
            <person name="Purnelle B."/>
            <person name="Rasmussen S.W."/>
            <person name="Remacha M.A."/>
            <person name="Revuelta J.L."/>
            <person name="Rieger M."/>
            <person name="Salom D."/>
            <person name="Saluz H.P."/>
            <person name="Saiz J.E."/>
            <person name="Saren A.-M."/>
            <person name="Schaefer M."/>
            <person name="Scharfe M."/>
            <person name="Schmidt E.R."/>
            <person name="Schneider C."/>
            <person name="Scholler P."/>
            <person name="Schwarz S."/>
            <person name="Soler-Mira A."/>
            <person name="Urrestarazu L.A."/>
            <person name="Verhasselt P."/>
            <person name="Vissers S."/>
            <person name="Voet M."/>
            <person name="Volckaert G."/>
            <person name="Wagner G."/>
            <person name="Wambutt R."/>
            <person name="Wedler E."/>
            <person name="Wedler H."/>
            <person name="Woelfl S."/>
            <person name="Harris D.E."/>
            <person name="Bowman S."/>
            <person name="Brown D."/>
            <person name="Churcher C.M."/>
            <person name="Connor R."/>
            <person name="Dedman K."/>
            <person name="Gentles S."/>
            <person name="Hamlin N."/>
            <person name="Hunt S."/>
            <person name="Jones L."/>
            <person name="McDonald S."/>
            <person name="Murphy L.D."/>
            <person name="Niblett D."/>
            <person name="Odell C."/>
            <person name="Oliver K."/>
            <person name="Rajandream M.A."/>
            <person name="Richards C."/>
            <person name="Shore L."/>
            <person name="Walsh S.V."/>
            <person name="Barrell B.G."/>
            <person name="Dietrich F.S."/>
            <person name="Mulligan J.T."/>
            <person name="Allen E."/>
            <person name="Araujo R."/>
            <person name="Aviles E."/>
            <person name="Berno A."/>
            <person name="Carpenter J."/>
            <person name="Chen E."/>
            <person name="Cherry J.M."/>
            <person name="Chung E."/>
            <person name="Duncan M."/>
            <person name="Hunicke-Smith S."/>
            <person name="Hyman R.W."/>
            <person name="Komp C."/>
            <person name="Lashkari D."/>
            <person name="Lew H."/>
            <person name="Lin D."/>
            <person name="Mosedale D."/>
            <person name="Nakahara K."/>
            <person name="Namath A."/>
            <person name="Oefner P."/>
            <person name="Oh C."/>
            <person name="Petel F.X."/>
            <person name="Roberts D."/>
            <person name="Schramm S."/>
            <person name="Schroeder M."/>
            <person name="Shogren T."/>
            <person name="Shroff N."/>
            <person name="Winant A."/>
            <person name="Yelton M.A."/>
            <person name="Botstein D."/>
            <person name="Davis R.W."/>
            <person name="Johnston M."/>
            <person name="Andrews S."/>
            <person name="Brinkman R."/>
            <person name="Cooper J."/>
            <person name="Ding H."/>
            <person name="Du Z."/>
            <person name="Favello A."/>
            <person name="Fulton L."/>
            <person name="Gattung S."/>
            <person name="Greco T."/>
            <person name="Hallsworth K."/>
            <person name="Hawkins J."/>
            <person name="Hillier L.W."/>
            <person name="Jier M."/>
            <person name="Johnson D."/>
            <person name="Johnston L."/>
            <person name="Kirsten J."/>
            <person name="Kucaba T."/>
            <person name="Langston Y."/>
            <person name="Latreille P."/>
            <person name="Le T."/>
            <person name="Mardis E."/>
            <person name="Menezes S."/>
            <person name="Miller N."/>
            <person name="Nhan M."/>
            <person name="Pauley A."/>
            <person name="Peluso D."/>
            <person name="Rifkin L."/>
            <person name="Riles L."/>
            <person name="Taich A."/>
            <person name="Trevaskis E."/>
            <person name="Vignati D."/>
            <person name="Wilcox L."/>
            <person name="Wohldman P."/>
            <person name="Vaudin M."/>
            <person name="Wilson R."/>
            <person name="Waterston R."/>
            <person name="Albermann K."/>
            <person name="Hani J."/>
            <person name="Heumann K."/>
            <person name="Kleine K."/>
            <person name="Mewes H.-W."/>
            <person name="Zollner A."/>
            <person name="Zaccaria P."/>
        </authorList>
    </citation>
    <scope>NUCLEOTIDE SEQUENCE [LARGE SCALE GENOMIC DNA]</scope>
    <source>
        <strain>ATCC 204508 / S288c</strain>
    </source>
</reference>
<reference key="4">
    <citation type="journal article" date="2014" name="G3 (Bethesda)">
        <title>The reference genome sequence of Saccharomyces cerevisiae: Then and now.</title>
        <authorList>
            <person name="Engel S.R."/>
            <person name="Dietrich F.S."/>
            <person name="Fisk D.G."/>
            <person name="Binkley G."/>
            <person name="Balakrishnan R."/>
            <person name="Costanzo M.C."/>
            <person name="Dwight S.S."/>
            <person name="Hitz B.C."/>
            <person name="Karra K."/>
            <person name="Nash R.S."/>
            <person name="Weng S."/>
            <person name="Wong E.D."/>
            <person name="Lloyd P."/>
            <person name="Skrzypek M.S."/>
            <person name="Miyasato S.R."/>
            <person name="Simison M."/>
            <person name="Cherry J.M."/>
        </authorList>
    </citation>
    <scope>GENOME REANNOTATION</scope>
    <source>
        <strain>ATCC 204508 / S288c</strain>
    </source>
</reference>
<reference key="5">
    <citation type="journal article" date="2007" name="Genome Res.">
        <title>Approaching a complete repository of sequence-verified protein-encoding clones for Saccharomyces cerevisiae.</title>
        <authorList>
            <person name="Hu Y."/>
            <person name="Rolfs A."/>
            <person name="Bhullar B."/>
            <person name="Murthy T.V.S."/>
            <person name="Zhu C."/>
            <person name="Berger M.F."/>
            <person name="Camargo A.A."/>
            <person name="Kelley F."/>
            <person name="McCarron S."/>
            <person name="Jepson D."/>
            <person name="Richardson A."/>
            <person name="Raphael J."/>
            <person name="Moreira D."/>
            <person name="Taycher E."/>
            <person name="Zuo D."/>
            <person name="Mohr S."/>
            <person name="Kane M.F."/>
            <person name="Williamson J."/>
            <person name="Simpson A.J.G."/>
            <person name="Bulyk M.L."/>
            <person name="Harlow E."/>
            <person name="Marsischky G."/>
            <person name="Kolodner R.D."/>
            <person name="LaBaer J."/>
        </authorList>
    </citation>
    <scope>NUCLEOTIDE SEQUENCE [GENOMIC DNA]</scope>
    <source>
        <strain>ATCC 204508 / S288c</strain>
    </source>
</reference>
<reference key="6">
    <citation type="journal article" date="1994" name="Genes Dev.">
        <title>NOT1(CDC39), NOT2(CDC36), NOT3, and NOT4 encode a global-negative regulator of transcription that differentially affects TATA-element utilization.</title>
        <authorList>
            <person name="Collart M.A."/>
            <person name="Struhl K."/>
        </authorList>
    </citation>
    <scope>CHARACTERIZATION</scope>
</reference>
<reference key="7">
    <citation type="journal article" date="1998" name="EMBO J.">
        <title>The NOT proteins are part of the CCR4 transcriptional complex and affect gene expression both positively and negatively.</title>
        <authorList>
            <person name="Liu H.Y."/>
            <person name="Badarinarayana V."/>
            <person name="Audino D.C."/>
            <person name="Rappsilber J."/>
            <person name="Mann M."/>
            <person name="Denis C.L."/>
        </authorList>
    </citation>
    <scope>IDENTIFICATION IN THE CCR4-NOT CORE COMPLEX</scope>
    <scope>FUNCTION OF THE CCR4-NOT CORE COMPLEX IN TRANSCRIPTIONAL REGULATION</scope>
</reference>
<reference key="8">
    <citation type="journal article" date="1999" name="Mol. Cell. Biol.">
        <title>The CCR4 and CAF1 proteins of the CCR4-NOT complex are physically and functionally separated from NOT2, NOT4, and NOT5.</title>
        <authorList>
            <person name="Bai Y."/>
            <person name="Salvadore C."/>
            <person name="Chiang Y.C."/>
            <person name="Collart M.A."/>
            <person name="Liu H.Y."/>
            <person name="Denis C.L."/>
        </authorList>
    </citation>
    <scope>INTERACTION WITH NOT1</scope>
</reference>
<reference key="9">
    <citation type="journal article" date="2001" name="J. Mol. Biol.">
        <title>Purification and characterization of the 1.0 MDa CCR4-NOT complex identifies two novel components of the complex.</title>
        <authorList>
            <person name="Chen J."/>
            <person name="Rappsilber J."/>
            <person name="Chiang Y.C."/>
            <person name="Russell P."/>
            <person name="Mann M."/>
            <person name="Denis C.L."/>
        </authorList>
    </citation>
    <scope>IDENTIFICATION IN THE CCR4-NOT CORE COMPLEX</scope>
</reference>
<reference key="10">
    <citation type="journal article" date="2002" name="EMBO J.">
        <title>Ccr4p is the catalytic subunit of a Ccr4p/Pop2p/Notp mRNA deadenylase complex in Saccharomyces cerevisiae.</title>
        <authorList>
            <person name="Tucker M."/>
            <person name="Staples R.R."/>
            <person name="Valencia-Sanchez M.A."/>
            <person name="Muhlrad D."/>
            <person name="Parker R."/>
        </authorList>
    </citation>
    <scope>SUBCELLULAR LOCATION</scope>
</reference>
<reference key="11">
    <citation type="journal article" date="2002" name="J. Mol. Biol.">
        <title>Characterization of mutations in NOT2 indicates that it plays an important role in maintaining the integrity of the CCR4-NOT complex.</title>
        <authorList>
            <person name="Russell P."/>
            <person name="Benson J.D."/>
            <person name="Denis C.L."/>
        </authorList>
    </citation>
    <scope>INTERACTION WITH NOT5</scope>
</reference>
<reference key="12">
    <citation type="journal article" date="2003" name="Nature">
        <title>Global analysis of protein expression in yeast.</title>
        <authorList>
            <person name="Ghaemmaghami S."/>
            <person name="Huh W.-K."/>
            <person name="Bower K."/>
            <person name="Howson R.W."/>
            <person name="Belle A."/>
            <person name="Dephoure N."/>
            <person name="O'Shea E.K."/>
            <person name="Weissman J.S."/>
        </authorList>
    </citation>
    <scope>LEVEL OF PROTEIN EXPRESSION [LARGE SCALE ANALYSIS]</scope>
</reference>
<protein>
    <recommendedName>
        <fullName>General negative regulator of transcription subunit 2</fullName>
    </recommendedName>
    <alternativeName>
        <fullName>cell division cycle protein 36</fullName>
    </alternativeName>
</protein>
<organism>
    <name type="scientific">Saccharomyces cerevisiae (strain ATCC 204508 / S288c)</name>
    <name type="common">Baker's yeast</name>
    <dbReference type="NCBI Taxonomy" id="559292"/>
    <lineage>
        <taxon>Eukaryota</taxon>
        <taxon>Fungi</taxon>
        <taxon>Dikarya</taxon>
        <taxon>Ascomycota</taxon>
        <taxon>Saccharomycotina</taxon>
        <taxon>Saccharomycetes</taxon>
        <taxon>Saccharomycetales</taxon>
        <taxon>Saccharomycetaceae</taxon>
        <taxon>Saccharomyces</taxon>
    </lineage>
</organism>
<sequence>MEKFGLKALVPLLKLEDKELSSTYDHSMTLGADLSSMLYSLGIPRDSQDHRVLDTFQSPWAETSRSEVEPRFFTPESFTNIPGVLQSTVTPPCFNSIQNDQQRVALFQDETLFFLFYKHPGTVIQELTYLELRKRNWRYHKTLKAWLTKDPMMEPIVSADGLSERGSYVFFDPQRWEKCQRDFLLFYNAIM</sequence>
<proteinExistence type="evidence at protein level"/>
<accession>P06100</accession>
<accession>D6VRI6</accession>
<evidence type="ECO:0000269" key="1">
    <source>
    </source>
</evidence>
<evidence type="ECO:0000269" key="2">
    <source>
    </source>
</evidence>
<evidence type="ECO:0000269" key="3">
    <source>
    </source>
</evidence>
<evidence type="ECO:0000269" key="4">
    <source>
    </source>
</evidence>
<evidence type="ECO:0000269" key="5">
    <source>
    </source>
</evidence>
<evidence type="ECO:0000269" key="6">
    <source>
    </source>
</evidence>
<evidence type="ECO:0000305" key="7"/>
<evidence type="ECO:0007829" key="8">
    <source>
        <dbReference type="PDB" id="4BY6"/>
    </source>
</evidence>
<name>NOT2_YEAST</name>
<gene>
    <name type="primary">CDC36</name>
    <name type="synonym">DNA19</name>
    <name type="synonym">NOT2</name>
    <name type="ordered locus">YDL165W</name>
</gene>
<dbReference type="EMBL" id="X04287">
    <property type="protein sequence ID" value="CAA27835.1"/>
    <property type="molecule type" value="Genomic_DNA"/>
</dbReference>
<dbReference type="EMBL" id="X03246">
    <property type="protein sequence ID" value="CAA27006.1"/>
    <property type="molecule type" value="Genomic_DNA"/>
</dbReference>
<dbReference type="EMBL" id="Z67750">
    <property type="protein sequence ID" value="CAA91581.1"/>
    <property type="molecule type" value="Genomic_DNA"/>
</dbReference>
<dbReference type="EMBL" id="Z74213">
    <property type="protein sequence ID" value="CAA98739.1"/>
    <property type="molecule type" value="Genomic_DNA"/>
</dbReference>
<dbReference type="EMBL" id="X68020">
    <property type="protein sequence ID" value="CAA48160.1"/>
    <property type="molecule type" value="Genomic_DNA"/>
</dbReference>
<dbReference type="EMBL" id="AY557644">
    <property type="protein sequence ID" value="AAS55970.1"/>
    <property type="molecule type" value="Genomic_DNA"/>
</dbReference>
<dbReference type="EMBL" id="BK006938">
    <property type="protein sequence ID" value="DAA11696.1"/>
    <property type="molecule type" value="Genomic_DNA"/>
</dbReference>
<dbReference type="PIR" id="S12304">
    <property type="entry name" value="RGBY36"/>
</dbReference>
<dbReference type="RefSeq" id="NP_010116.1">
    <property type="nucleotide sequence ID" value="NM_001180225.1"/>
</dbReference>
<dbReference type="PDB" id="4BY6">
    <property type="method" value="X-ray"/>
    <property type="resolution" value="2.80 A"/>
    <property type="chains" value="B/E=1-191"/>
</dbReference>
<dbReference type="PDBsum" id="4BY6"/>
<dbReference type="SMR" id="P06100"/>
<dbReference type="BioGRID" id="31900">
    <property type="interactions" value="250"/>
</dbReference>
<dbReference type="ComplexPortal" id="CPX-1800">
    <property type="entry name" value="CCR4-NOT mRNA deadenylase complex"/>
</dbReference>
<dbReference type="DIP" id="DIP-590N"/>
<dbReference type="FunCoup" id="P06100">
    <property type="interactions" value="169"/>
</dbReference>
<dbReference type="IntAct" id="P06100">
    <property type="interactions" value="28"/>
</dbReference>
<dbReference type="MINT" id="P06100"/>
<dbReference type="STRING" id="4932.YDL165W"/>
<dbReference type="GlyGen" id="P06100">
    <property type="glycosylation" value="1 site"/>
</dbReference>
<dbReference type="iPTMnet" id="P06100"/>
<dbReference type="PaxDb" id="4932-YDL165W"/>
<dbReference type="PeptideAtlas" id="P06100"/>
<dbReference type="EnsemblFungi" id="YDL165W_mRNA">
    <property type="protein sequence ID" value="YDL165W"/>
    <property type="gene ID" value="YDL165W"/>
</dbReference>
<dbReference type="GeneID" id="851389"/>
<dbReference type="KEGG" id="sce:YDL165W"/>
<dbReference type="AGR" id="SGD:S000002324"/>
<dbReference type="SGD" id="S000002324">
    <property type="gene designation" value="CDC36"/>
</dbReference>
<dbReference type="VEuPathDB" id="FungiDB:YDL165W"/>
<dbReference type="eggNOG" id="KOG2151">
    <property type="taxonomic scope" value="Eukaryota"/>
</dbReference>
<dbReference type="HOGENOM" id="CLU_033275_4_1_1"/>
<dbReference type="InParanoid" id="P06100"/>
<dbReference type="OMA" id="IFYMKPR"/>
<dbReference type="OrthoDB" id="25391at2759"/>
<dbReference type="BioCyc" id="YEAST:G3O-29557-MONOMER"/>
<dbReference type="BioGRID-ORCS" id="851389">
    <property type="hits" value="2 hits in 10 CRISPR screens"/>
</dbReference>
<dbReference type="CD-CODE" id="A777E0F8">
    <property type="entry name" value="P-body"/>
</dbReference>
<dbReference type="EvolutionaryTrace" id="P06100"/>
<dbReference type="PRO" id="PR:P06100"/>
<dbReference type="Proteomes" id="UP000002311">
    <property type="component" value="Chromosome IV"/>
</dbReference>
<dbReference type="RNAct" id="P06100">
    <property type="molecule type" value="protein"/>
</dbReference>
<dbReference type="GO" id="GO:0030015">
    <property type="term" value="C:CCR4-NOT core complex"/>
    <property type="evidence" value="ECO:0000353"/>
    <property type="project" value="SGD"/>
</dbReference>
<dbReference type="GO" id="GO:0005737">
    <property type="term" value="C:cytoplasm"/>
    <property type="evidence" value="ECO:0000314"/>
    <property type="project" value="SGD"/>
</dbReference>
<dbReference type="GO" id="GO:0005634">
    <property type="term" value="C:nucleus"/>
    <property type="evidence" value="ECO:0000314"/>
    <property type="project" value="SGD"/>
</dbReference>
<dbReference type="GO" id="GO:0000290">
    <property type="term" value="P:deadenylation-dependent decapping of nuclear-transcribed mRNA"/>
    <property type="evidence" value="ECO:0000315"/>
    <property type="project" value="SGD"/>
</dbReference>
<dbReference type="GO" id="GO:0031087">
    <property type="term" value="P:deadenylation-independent decapping of nuclear-transcribed mRNA"/>
    <property type="evidence" value="ECO:0000315"/>
    <property type="project" value="SGD"/>
</dbReference>
<dbReference type="GO" id="GO:0000288">
    <property type="term" value="P:nuclear-transcribed mRNA catabolic process, deadenylation-dependent decay"/>
    <property type="evidence" value="ECO:0000314"/>
    <property type="project" value="SGD"/>
</dbReference>
<dbReference type="GO" id="GO:0000289">
    <property type="term" value="P:nuclear-transcribed mRNA poly(A) tail shortening"/>
    <property type="evidence" value="ECO:0000314"/>
    <property type="project" value="SGD"/>
</dbReference>
<dbReference type="GO" id="GO:0032968">
    <property type="term" value="P:positive regulation of transcription elongation by RNA polymerase II"/>
    <property type="evidence" value="ECO:0000314"/>
    <property type="project" value="ComplexPortal"/>
</dbReference>
<dbReference type="GO" id="GO:0016567">
    <property type="term" value="P:protein ubiquitination"/>
    <property type="evidence" value="ECO:0000315"/>
    <property type="project" value="SGD"/>
</dbReference>
<dbReference type="GO" id="GO:0051726">
    <property type="term" value="P:regulation of cell cycle"/>
    <property type="evidence" value="ECO:0000315"/>
    <property type="project" value="SGD"/>
</dbReference>
<dbReference type="GO" id="GO:0000749">
    <property type="term" value="P:response to pheromone triggering conjugation with cellular fusion"/>
    <property type="evidence" value="ECO:0000315"/>
    <property type="project" value="SGD"/>
</dbReference>
<dbReference type="GO" id="GO:0006368">
    <property type="term" value="P:transcription elongation by RNA polymerase II"/>
    <property type="evidence" value="ECO:0000315"/>
    <property type="project" value="SGD"/>
</dbReference>
<dbReference type="FunFam" id="2.30.30.1020:FF:000012">
    <property type="entry name" value="CCR4-NOT transcriptional complex subunit"/>
    <property type="match status" value="1"/>
</dbReference>
<dbReference type="Gene3D" id="2.30.30.1020">
    <property type="entry name" value="CCR4-NOT complex subunit 2/3/5, C-terminal domain"/>
    <property type="match status" value="1"/>
</dbReference>
<dbReference type="InterPro" id="IPR038635">
    <property type="entry name" value="CCR4-NOT_su2/3/5_C_sf"/>
</dbReference>
<dbReference type="InterPro" id="IPR040168">
    <property type="entry name" value="Not2/3/5"/>
</dbReference>
<dbReference type="InterPro" id="IPR007282">
    <property type="entry name" value="NOT2/3/5_C"/>
</dbReference>
<dbReference type="PANTHER" id="PTHR23326">
    <property type="entry name" value="CCR4 NOT-RELATED"/>
    <property type="match status" value="1"/>
</dbReference>
<dbReference type="Pfam" id="PF04153">
    <property type="entry name" value="NOT2_3_5_C"/>
    <property type="match status" value="1"/>
</dbReference>